<name>G6PI_YERPG</name>
<feature type="chain" id="PRO_1000125780" description="Glucose-6-phosphate isomerase">
    <location>
        <begin position="1"/>
        <end position="548"/>
    </location>
</feature>
<feature type="active site" description="Proton donor" evidence="1">
    <location>
        <position position="355"/>
    </location>
</feature>
<feature type="active site" evidence="1">
    <location>
        <position position="386"/>
    </location>
</feature>
<feature type="active site" evidence="1">
    <location>
        <position position="514"/>
    </location>
</feature>
<reference key="1">
    <citation type="journal article" date="2010" name="J. Bacteriol.">
        <title>Genome sequence of the deep-rooted Yersinia pestis strain Angola reveals new insights into the evolution and pangenome of the plague bacterium.</title>
        <authorList>
            <person name="Eppinger M."/>
            <person name="Worsham P.L."/>
            <person name="Nikolich M.P."/>
            <person name="Riley D.R."/>
            <person name="Sebastian Y."/>
            <person name="Mou S."/>
            <person name="Achtman M."/>
            <person name="Lindler L.E."/>
            <person name="Ravel J."/>
        </authorList>
    </citation>
    <scope>NUCLEOTIDE SEQUENCE [LARGE SCALE GENOMIC DNA]</scope>
    <source>
        <strain>Angola</strain>
    </source>
</reference>
<accession>A9R536</accession>
<dbReference type="EC" id="5.3.1.9" evidence="1"/>
<dbReference type="EMBL" id="CP000901">
    <property type="protein sequence ID" value="ABX86967.1"/>
    <property type="molecule type" value="Genomic_DNA"/>
</dbReference>
<dbReference type="RefSeq" id="WP_002212085.1">
    <property type="nucleotide sequence ID" value="NZ_CP009935.1"/>
</dbReference>
<dbReference type="SMR" id="A9R536"/>
<dbReference type="GeneID" id="57975003"/>
<dbReference type="KEGG" id="ypg:YpAngola_A3918"/>
<dbReference type="PATRIC" id="fig|349746.12.peg.637"/>
<dbReference type="UniPathway" id="UPA00109">
    <property type="reaction ID" value="UER00181"/>
</dbReference>
<dbReference type="UniPathway" id="UPA00138"/>
<dbReference type="GO" id="GO:0005829">
    <property type="term" value="C:cytosol"/>
    <property type="evidence" value="ECO:0007669"/>
    <property type="project" value="TreeGrafter"/>
</dbReference>
<dbReference type="GO" id="GO:0097367">
    <property type="term" value="F:carbohydrate derivative binding"/>
    <property type="evidence" value="ECO:0007669"/>
    <property type="project" value="InterPro"/>
</dbReference>
<dbReference type="GO" id="GO:0004347">
    <property type="term" value="F:glucose-6-phosphate isomerase activity"/>
    <property type="evidence" value="ECO:0007669"/>
    <property type="project" value="UniProtKB-UniRule"/>
</dbReference>
<dbReference type="GO" id="GO:0048029">
    <property type="term" value="F:monosaccharide binding"/>
    <property type="evidence" value="ECO:0007669"/>
    <property type="project" value="TreeGrafter"/>
</dbReference>
<dbReference type="GO" id="GO:0006094">
    <property type="term" value="P:gluconeogenesis"/>
    <property type="evidence" value="ECO:0007669"/>
    <property type="project" value="UniProtKB-UniRule"/>
</dbReference>
<dbReference type="GO" id="GO:0051156">
    <property type="term" value="P:glucose 6-phosphate metabolic process"/>
    <property type="evidence" value="ECO:0007669"/>
    <property type="project" value="TreeGrafter"/>
</dbReference>
<dbReference type="GO" id="GO:0006096">
    <property type="term" value="P:glycolytic process"/>
    <property type="evidence" value="ECO:0007669"/>
    <property type="project" value="UniProtKB-UniRule"/>
</dbReference>
<dbReference type="CDD" id="cd05015">
    <property type="entry name" value="SIS_PGI_1"/>
    <property type="match status" value="1"/>
</dbReference>
<dbReference type="CDD" id="cd05016">
    <property type="entry name" value="SIS_PGI_2"/>
    <property type="match status" value="1"/>
</dbReference>
<dbReference type="FunFam" id="1.10.1390.10:FF:000001">
    <property type="entry name" value="Glucose-6-phosphate isomerase"/>
    <property type="match status" value="1"/>
</dbReference>
<dbReference type="FunFam" id="3.40.50.10490:FF:000004">
    <property type="entry name" value="Glucose-6-phosphate isomerase"/>
    <property type="match status" value="1"/>
</dbReference>
<dbReference type="Gene3D" id="1.10.1390.10">
    <property type="match status" value="1"/>
</dbReference>
<dbReference type="Gene3D" id="3.40.50.10490">
    <property type="entry name" value="Glucose-6-phosphate isomerase like protein, domain 1"/>
    <property type="match status" value="2"/>
</dbReference>
<dbReference type="HAMAP" id="MF_00473">
    <property type="entry name" value="G6P_isomerase"/>
    <property type="match status" value="1"/>
</dbReference>
<dbReference type="InterPro" id="IPR001672">
    <property type="entry name" value="G6P_Isomerase"/>
</dbReference>
<dbReference type="InterPro" id="IPR023096">
    <property type="entry name" value="G6P_Isomerase_C"/>
</dbReference>
<dbReference type="InterPro" id="IPR018189">
    <property type="entry name" value="Phosphoglucose_isomerase_CS"/>
</dbReference>
<dbReference type="InterPro" id="IPR046348">
    <property type="entry name" value="SIS_dom_sf"/>
</dbReference>
<dbReference type="InterPro" id="IPR035476">
    <property type="entry name" value="SIS_PGI_1"/>
</dbReference>
<dbReference type="InterPro" id="IPR035482">
    <property type="entry name" value="SIS_PGI_2"/>
</dbReference>
<dbReference type="NCBIfam" id="NF001211">
    <property type="entry name" value="PRK00179.1"/>
    <property type="match status" value="1"/>
</dbReference>
<dbReference type="PANTHER" id="PTHR11469">
    <property type="entry name" value="GLUCOSE-6-PHOSPHATE ISOMERASE"/>
    <property type="match status" value="1"/>
</dbReference>
<dbReference type="PANTHER" id="PTHR11469:SF1">
    <property type="entry name" value="GLUCOSE-6-PHOSPHATE ISOMERASE"/>
    <property type="match status" value="1"/>
</dbReference>
<dbReference type="Pfam" id="PF00342">
    <property type="entry name" value="PGI"/>
    <property type="match status" value="1"/>
</dbReference>
<dbReference type="PRINTS" id="PR00662">
    <property type="entry name" value="G6PISOMERASE"/>
</dbReference>
<dbReference type="SUPFAM" id="SSF53697">
    <property type="entry name" value="SIS domain"/>
    <property type="match status" value="1"/>
</dbReference>
<dbReference type="PROSITE" id="PS00765">
    <property type="entry name" value="P_GLUCOSE_ISOMERASE_1"/>
    <property type="match status" value="1"/>
</dbReference>
<dbReference type="PROSITE" id="PS00174">
    <property type="entry name" value="P_GLUCOSE_ISOMERASE_2"/>
    <property type="match status" value="1"/>
</dbReference>
<dbReference type="PROSITE" id="PS51463">
    <property type="entry name" value="P_GLUCOSE_ISOMERASE_3"/>
    <property type="match status" value="1"/>
</dbReference>
<protein>
    <recommendedName>
        <fullName evidence="1">Glucose-6-phosphate isomerase</fullName>
        <shortName evidence="1">GPI</shortName>
        <ecNumber evidence="1">5.3.1.9</ecNumber>
    </recommendedName>
    <alternativeName>
        <fullName evidence="1">Phosphoglucose isomerase</fullName>
        <shortName evidence="1">PGI</shortName>
    </alternativeName>
    <alternativeName>
        <fullName evidence="1">Phosphohexose isomerase</fullName>
        <shortName evidence="1">PHI</shortName>
    </alternativeName>
</protein>
<gene>
    <name evidence="1" type="primary">pgi</name>
    <name type="ordered locus">YpAngola_A3918</name>
</gene>
<keyword id="KW-0963">Cytoplasm</keyword>
<keyword id="KW-0312">Gluconeogenesis</keyword>
<keyword id="KW-0324">Glycolysis</keyword>
<keyword id="KW-0413">Isomerase</keyword>
<sequence>MKNINPSQTAAWKALQQHFEQMKDVTISSLFAKDDQRFNRFSATFDDQMLVDFSKNRITSETLEKLQDLAKETDLAGAIKSMFSGEKINRTEDRAVLHIALRNRSNTPIVVDGKDVMPEVNAVLAKMKQFCDRVISGDWKGYTGKAITDVVNIGIGGSDLGPYMVTEALRPYKNHLNMHFVSNVDGTHIAEALKPLNPETTLFLVASKTFTTQETMTNAHSARDWFLSAAGDPAHVAKHFAALSTNAKAVGEFGIDTNNMFEFWDWVGGRYSLWSAIGLSIALSVGFEHFEQLLSGAHAMDKHFAETPAEKNLPVLLALIGIWYNNFFGAETEAILPYDQYMHRFPAYFQQGNMESNGKYVDRNGHPVDYQTGPIIWGEPGTNGQHAFYQLIHQGTKLIPCDFIAPAISHNPLSDHHAKLLSNFFAQTEALAFGKSLEDVEAEFAAAGKTPEQVAHVAPFKVFEGNRPTNSILLREITPFSLGALIALYEHKIFTQGVILNIYTFDQWGVELGKQLANRILPELADDQEVTSHDSSTNALINRFKNWR</sequence>
<organism>
    <name type="scientific">Yersinia pestis bv. Antiqua (strain Angola)</name>
    <dbReference type="NCBI Taxonomy" id="349746"/>
    <lineage>
        <taxon>Bacteria</taxon>
        <taxon>Pseudomonadati</taxon>
        <taxon>Pseudomonadota</taxon>
        <taxon>Gammaproteobacteria</taxon>
        <taxon>Enterobacterales</taxon>
        <taxon>Yersiniaceae</taxon>
        <taxon>Yersinia</taxon>
    </lineage>
</organism>
<comment type="function">
    <text evidence="1">Catalyzes the reversible isomerization of glucose-6-phosphate to fructose-6-phosphate.</text>
</comment>
<comment type="catalytic activity">
    <reaction evidence="1">
        <text>alpha-D-glucose 6-phosphate = beta-D-fructose 6-phosphate</text>
        <dbReference type="Rhea" id="RHEA:11816"/>
        <dbReference type="ChEBI" id="CHEBI:57634"/>
        <dbReference type="ChEBI" id="CHEBI:58225"/>
        <dbReference type="EC" id="5.3.1.9"/>
    </reaction>
</comment>
<comment type="pathway">
    <text evidence="1">Carbohydrate biosynthesis; gluconeogenesis.</text>
</comment>
<comment type="pathway">
    <text evidence="1">Carbohydrate degradation; glycolysis; D-glyceraldehyde 3-phosphate and glycerone phosphate from D-glucose: step 2/4.</text>
</comment>
<comment type="subcellular location">
    <subcellularLocation>
        <location evidence="1">Cytoplasm</location>
    </subcellularLocation>
</comment>
<comment type="similarity">
    <text evidence="1">Belongs to the GPI family.</text>
</comment>
<evidence type="ECO:0000255" key="1">
    <source>
        <dbReference type="HAMAP-Rule" id="MF_00473"/>
    </source>
</evidence>
<proteinExistence type="inferred from homology"/>